<dbReference type="EMBL" id="AY653733">
    <property type="protein sequence ID" value="AAV50799.1"/>
    <property type="molecule type" value="Genomic_DNA"/>
</dbReference>
<dbReference type="SMR" id="Q5UQA1"/>
<dbReference type="Proteomes" id="UP000001134">
    <property type="component" value="Genome"/>
</dbReference>
<reference key="1">
    <citation type="journal article" date="2004" name="Science">
        <title>The 1.2-megabase genome sequence of Mimivirus.</title>
        <authorList>
            <person name="Raoult D."/>
            <person name="Audic S."/>
            <person name="Robert C."/>
            <person name="Abergel C."/>
            <person name="Renesto P."/>
            <person name="Ogata H."/>
            <person name="La Scola B."/>
            <person name="Susan M."/>
            <person name="Claverie J.-M."/>
        </authorList>
    </citation>
    <scope>NUCLEOTIDE SEQUENCE [LARGE SCALE GENOMIC DNA]</scope>
    <source>
        <strain>Rowbotham-Bradford</strain>
    </source>
</reference>
<accession>Q5UQA1</accession>
<sequence length="356" mass="41693">MALIWRLISEEHSIVNLTDDQIETLSSTILKKSSKLSINDKKREIKPIIKKTDFEDKISESGYTETFDTISQYFKLSYQKILVVHNYIDHISSIASNLMNIDLKSIDLLFEEINTINYLKQESHQKLMTDSEMALKNKIVHQYVKNPNNVTLYKKILESINTITTKYNLQKIQESLCSEIKRIDNLLVNSYQKELDKTTNLTKIITHLESIDNNTTLHELFKKIQSNPKIIHENIDKTDQWIMFVDKCIKLNIDKSLIVSLLEIIIVQKILFYNDITRTNSIKDISIIYPQCLNVFLLSNLNKSFIFSKLYMFLNYTMRYSGKNLGDYIKSVTQKDYDNLLFLEQKLLDLCVNSNE</sequence>
<feature type="chain" id="PRO_0000243969" description="Uncharacterized protein R535">
    <location>
        <begin position="1"/>
        <end position="356"/>
    </location>
</feature>
<protein>
    <recommendedName>
        <fullName>Uncharacterized protein R535</fullName>
    </recommendedName>
</protein>
<keyword id="KW-1185">Reference proteome</keyword>
<proteinExistence type="predicted"/>
<organismHost>
    <name type="scientific">Acanthamoeba polyphaga</name>
    <name type="common">Amoeba</name>
    <dbReference type="NCBI Taxonomy" id="5757"/>
</organismHost>
<organism>
    <name type="scientific">Acanthamoeba polyphaga mimivirus</name>
    <name type="common">APMV</name>
    <dbReference type="NCBI Taxonomy" id="212035"/>
    <lineage>
        <taxon>Viruses</taxon>
        <taxon>Varidnaviria</taxon>
        <taxon>Bamfordvirae</taxon>
        <taxon>Nucleocytoviricota</taxon>
        <taxon>Megaviricetes</taxon>
        <taxon>Imitervirales</taxon>
        <taxon>Mimiviridae</taxon>
        <taxon>Megamimivirinae</taxon>
        <taxon>Mimivirus</taxon>
        <taxon>Mimivirus bradfordmassiliense</taxon>
    </lineage>
</organism>
<gene>
    <name type="ordered locus">MIMI_R535</name>
</gene>
<name>YR535_MIMIV</name>